<sequence length="175" mass="18523">MELTVGRVVKAHGISGEIVVEIRTDDPAARFAPGNTLRAKPSRGGPERSCVIESAREHGGRLLVRLAGVTDRDAADALRGTLFVVDSAELPDIDEPDTYYDHQLEGLQVRTTGGRRVGAVAEVLHTAAGELLAVRDDADGAPREVLVPFVSAIVTAVSLDDGLIEIDPPDGLLDL</sequence>
<reference key="1">
    <citation type="journal article" date="2005" name="Proc. Natl. Acad. Sci. U.S.A.">
        <title>The complete genome sequence of Mycobacterium avium subspecies paratuberculosis.</title>
        <authorList>
            <person name="Li L."/>
            <person name="Bannantine J.P."/>
            <person name="Zhang Q."/>
            <person name="Amonsin A."/>
            <person name="May B.J."/>
            <person name="Alt D."/>
            <person name="Banerji N."/>
            <person name="Kanjilal S."/>
            <person name="Kapur V."/>
        </authorList>
    </citation>
    <scope>NUCLEOTIDE SEQUENCE [LARGE SCALE GENOMIC DNA]</scope>
    <source>
        <strain>ATCC BAA-968 / K-10</strain>
    </source>
</reference>
<gene>
    <name evidence="1" type="primary">rimM</name>
    <name type="ordered locus">MAP_2975c</name>
</gene>
<name>RIMM_MYCPA</name>
<comment type="function">
    <text evidence="1">An accessory protein needed during the final step in the assembly of 30S ribosomal subunit, possibly for assembly of the head region. Essential for efficient processing of 16S rRNA. May be needed both before and after RbfA during the maturation of 16S rRNA. It has affinity for free ribosomal 30S subunits but not for 70S ribosomes.</text>
</comment>
<comment type="subunit">
    <text evidence="1">Binds ribosomal protein uS19.</text>
</comment>
<comment type="subcellular location">
    <subcellularLocation>
        <location evidence="1">Cytoplasm</location>
    </subcellularLocation>
</comment>
<comment type="domain">
    <text evidence="1">The PRC barrel domain binds ribosomal protein uS19.</text>
</comment>
<comment type="similarity">
    <text evidence="1">Belongs to the RimM family.</text>
</comment>
<keyword id="KW-0143">Chaperone</keyword>
<keyword id="KW-0963">Cytoplasm</keyword>
<keyword id="KW-1185">Reference proteome</keyword>
<keyword id="KW-0690">Ribosome biogenesis</keyword>
<keyword id="KW-0698">rRNA processing</keyword>
<accession>Q73VN8</accession>
<dbReference type="EMBL" id="AE016958">
    <property type="protein sequence ID" value="AAS05292.1"/>
    <property type="molecule type" value="Genomic_DNA"/>
</dbReference>
<dbReference type="RefSeq" id="WP_003875071.1">
    <property type="nucleotide sequence ID" value="NZ_CP106873.1"/>
</dbReference>
<dbReference type="SMR" id="Q73VN8"/>
<dbReference type="STRING" id="262316.MAP_2975c"/>
<dbReference type="KEGG" id="mpa:MAP_2975c"/>
<dbReference type="eggNOG" id="COG0806">
    <property type="taxonomic scope" value="Bacteria"/>
</dbReference>
<dbReference type="HOGENOM" id="CLU_077636_0_0_11"/>
<dbReference type="Proteomes" id="UP000000580">
    <property type="component" value="Chromosome"/>
</dbReference>
<dbReference type="GO" id="GO:0005737">
    <property type="term" value="C:cytoplasm"/>
    <property type="evidence" value="ECO:0007669"/>
    <property type="project" value="UniProtKB-SubCell"/>
</dbReference>
<dbReference type="GO" id="GO:0005840">
    <property type="term" value="C:ribosome"/>
    <property type="evidence" value="ECO:0007669"/>
    <property type="project" value="InterPro"/>
</dbReference>
<dbReference type="GO" id="GO:0043022">
    <property type="term" value="F:ribosome binding"/>
    <property type="evidence" value="ECO:0007669"/>
    <property type="project" value="InterPro"/>
</dbReference>
<dbReference type="GO" id="GO:0042274">
    <property type="term" value="P:ribosomal small subunit biogenesis"/>
    <property type="evidence" value="ECO:0007669"/>
    <property type="project" value="UniProtKB-UniRule"/>
</dbReference>
<dbReference type="GO" id="GO:0006364">
    <property type="term" value="P:rRNA processing"/>
    <property type="evidence" value="ECO:0007669"/>
    <property type="project" value="UniProtKB-UniRule"/>
</dbReference>
<dbReference type="Gene3D" id="2.30.30.240">
    <property type="entry name" value="PRC-barrel domain"/>
    <property type="match status" value="1"/>
</dbReference>
<dbReference type="Gene3D" id="2.40.30.60">
    <property type="entry name" value="RimM"/>
    <property type="match status" value="1"/>
</dbReference>
<dbReference type="HAMAP" id="MF_00014">
    <property type="entry name" value="Ribosome_mat_RimM"/>
    <property type="match status" value="1"/>
</dbReference>
<dbReference type="InterPro" id="IPR011033">
    <property type="entry name" value="PRC_barrel-like_sf"/>
</dbReference>
<dbReference type="InterPro" id="IPR056792">
    <property type="entry name" value="PRC_RimM"/>
</dbReference>
<dbReference type="InterPro" id="IPR011961">
    <property type="entry name" value="RimM"/>
</dbReference>
<dbReference type="InterPro" id="IPR002676">
    <property type="entry name" value="RimM_N"/>
</dbReference>
<dbReference type="InterPro" id="IPR036976">
    <property type="entry name" value="RimM_N_sf"/>
</dbReference>
<dbReference type="InterPro" id="IPR009000">
    <property type="entry name" value="Transl_B-barrel_sf"/>
</dbReference>
<dbReference type="NCBIfam" id="TIGR02273">
    <property type="entry name" value="16S_RimM"/>
    <property type="match status" value="1"/>
</dbReference>
<dbReference type="PANTHER" id="PTHR33692">
    <property type="entry name" value="RIBOSOME MATURATION FACTOR RIMM"/>
    <property type="match status" value="1"/>
</dbReference>
<dbReference type="PANTHER" id="PTHR33692:SF1">
    <property type="entry name" value="RIBOSOME MATURATION FACTOR RIMM"/>
    <property type="match status" value="1"/>
</dbReference>
<dbReference type="Pfam" id="PF24986">
    <property type="entry name" value="PRC_RimM"/>
    <property type="match status" value="1"/>
</dbReference>
<dbReference type="Pfam" id="PF01782">
    <property type="entry name" value="RimM"/>
    <property type="match status" value="1"/>
</dbReference>
<dbReference type="SUPFAM" id="SSF50346">
    <property type="entry name" value="PRC-barrel domain"/>
    <property type="match status" value="1"/>
</dbReference>
<dbReference type="SUPFAM" id="SSF50447">
    <property type="entry name" value="Translation proteins"/>
    <property type="match status" value="1"/>
</dbReference>
<protein>
    <recommendedName>
        <fullName evidence="1">Ribosome maturation factor RimM</fullName>
    </recommendedName>
</protein>
<evidence type="ECO:0000255" key="1">
    <source>
        <dbReference type="HAMAP-Rule" id="MF_00014"/>
    </source>
</evidence>
<proteinExistence type="inferred from homology"/>
<feature type="chain" id="PRO_0000163319" description="Ribosome maturation factor RimM">
    <location>
        <begin position="1"/>
        <end position="175"/>
    </location>
</feature>
<feature type="domain" description="PRC barrel" evidence="1">
    <location>
        <begin position="96"/>
        <end position="172"/>
    </location>
</feature>
<organism>
    <name type="scientific">Mycolicibacterium paratuberculosis (strain ATCC BAA-968 / K-10)</name>
    <name type="common">Mycobacterium paratuberculosis</name>
    <dbReference type="NCBI Taxonomy" id="262316"/>
    <lineage>
        <taxon>Bacteria</taxon>
        <taxon>Bacillati</taxon>
        <taxon>Actinomycetota</taxon>
        <taxon>Actinomycetes</taxon>
        <taxon>Mycobacteriales</taxon>
        <taxon>Mycobacteriaceae</taxon>
        <taxon>Mycobacterium</taxon>
        <taxon>Mycobacterium avium complex (MAC)</taxon>
    </lineage>
</organism>